<gene>
    <name type="primary">HCN3</name>
    <name type="synonym">KIAA1535</name>
</gene>
<proteinExistence type="evidence at protein level"/>
<name>HCN3_HUMAN</name>
<accession>Q9P1Z3</accession>
<accession>D3DV90</accession>
<accession>Q4VX12</accession>
<accession>Q8N6W6</accession>
<accession>Q9BWQ2</accession>
<sequence length="774" mass="86032">MEAEQRPAAGASEGATPGLEAVPPVAPPPATAASGPIPKSGPEPKRRHLGTLLQPTVNKFSLRVFGSHKAVEIEQERVKSAGAWIIHPYSDFRFYWDLIMLLLMVGNLIVLPVGITFFKEENSPPWIVFNVLSDTFFLLDLVLNFRTGIVVEEGAEILLAPRAIRTRYLRTWFLVDLISSIPVDYIFLVVELEPRLDAEVYKTARALRIVRFTKILSLLRLLRLSRLIRYIHQWEEIFHMTYDLASAVVRIFNLIGMMLLLCHWDGCLQFLVPMLQDFPPDCWVSINHMVNHSWGRQYSHALFKAMSHMLCIGYGQQAPVGMPDVWLTMLSMIVGATCYAMFIGHATALIQSLDSSRRQYQEKYKQVEQYMSFHKLPADTRQRIHEYYEHRYQGKMFDEESILGELSEPLREEIINFTCRGLVAHMPLFAHADPSFVTAVLTKLRFEVFQPGDLVVREGSVGRKMYFIQHGLLSVLARGARDTRLTDGSYFGEICLLTRGRRTASVRADTYCRLYSLSVDHFNAVLEEFPMMRRAFETVAMDRLLRIGKKNSILQRKRSEPSPGSSGGIMEQHLVQHDRDMARGVRGRAPSTGAQLSGKPVLWEPLVHAPLQAAAVTSNVAIALTHQRGPLPLSPDSPATLLARSAWRSAGSPASPLVPVRAGPWASTSRLPAPPARTLHASLSRAGRSQVSLLGPPPGGGGRRLGPRGRPLSASQPSLPQRATGDGSPGRKGSGSERLPPSGLLAKPPRTAQPPRPPVPEPATPRGLQLSANM</sequence>
<keyword id="KW-0002">3D-structure</keyword>
<keyword id="KW-0114">cAMP</keyword>
<keyword id="KW-0116">cAMP-binding</keyword>
<keyword id="KW-1003">Cell membrane</keyword>
<keyword id="KW-0325">Glycoprotein</keyword>
<keyword id="KW-0407">Ion channel</keyword>
<keyword id="KW-0406">Ion transport</keyword>
<keyword id="KW-1071">Ligand-gated ion channel</keyword>
<keyword id="KW-0472">Membrane</keyword>
<keyword id="KW-0547">Nucleotide-binding</keyword>
<keyword id="KW-0597">Phosphoprotein</keyword>
<keyword id="KW-0630">Potassium</keyword>
<keyword id="KW-0631">Potassium channel</keyword>
<keyword id="KW-0633">Potassium transport</keyword>
<keyword id="KW-1267">Proteomics identification</keyword>
<keyword id="KW-1185">Reference proteome</keyword>
<keyword id="KW-0915">Sodium</keyword>
<keyword id="KW-0894">Sodium channel</keyword>
<keyword id="KW-0739">Sodium transport</keyword>
<keyword id="KW-0812">Transmembrane</keyword>
<keyword id="KW-1133">Transmembrane helix</keyword>
<keyword id="KW-0813">Transport</keyword>
<keyword id="KW-0851">Voltage-gated channel</keyword>
<organism>
    <name type="scientific">Homo sapiens</name>
    <name type="common">Human</name>
    <dbReference type="NCBI Taxonomy" id="9606"/>
    <lineage>
        <taxon>Eukaryota</taxon>
        <taxon>Metazoa</taxon>
        <taxon>Chordata</taxon>
        <taxon>Craniata</taxon>
        <taxon>Vertebrata</taxon>
        <taxon>Euteleostomi</taxon>
        <taxon>Mammalia</taxon>
        <taxon>Eutheria</taxon>
        <taxon>Euarchontoglires</taxon>
        <taxon>Primates</taxon>
        <taxon>Haplorrhini</taxon>
        <taxon>Catarrhini</taxon>
        <taxon>Hominidae</taxon>
        <taxon>Homo</taxon>
    </lineage>
</organism>
<evidence type="ECO:0000250" key="1"/>
<evidence type="ECO:0000250" key="2">
    <source>
        <dbReference type="UniProtKB" id="O60741"/>
    </source>
</evidence>
<evidence type="ECO:0000250" key="3">
    <source>
        <dbReference type="UniProtKB" id="O88704"/>
    </source>
</evidence>
<evidence type="ECO:0000250" key="4">
    <source>
        <dbReference type="UniProtKB" id="O88705"/>
    </source>
</evidence>
<evidence type="ECO:0000250" key="5">
    <source>
        <dbReference type="UniProtKB" id="Q9UL51"/>
    </source>
</evidence>
<evidence type="ECO:0000255" key="6"/>
<evidence type="ECO:0000256" key="7">
    <source>
        <dbReference type="SAM" id="MobiDB-lite"/>
    </source>
</evidence>
<evidence type="ECO:0000269" key="8">
    <source>
    </source>
</evidence>
<evidence type="ECO:0000305" key="9"/>
<evidence type="ECO:0007829" key="10">
    <source>
        <dbReference type="PDB" id="8INZ"/>
    </source>
</evidence>
<feature type="chain" id="PRO_0000054114" description="Potassium/sodium hyperpolarization-activated cyclic nucleotide-gated channel 3">
    <location>
        <begin position="1"/>
        <end position="774"/>
    </location>
</feature>
<feature type="topological domain" description="Cytoplasmic" evidence="2">
    <location>
        <begin position="1"/>
        <end position="97"/>
    </location>
</feature>
<feature type="transmembrane region" description="Helical; Name=Segment S1" evidence="2">
    <location>
        <begin position="98"/>
        <end position="118"/>
    </location>
</feature>
<feature type="topological domain" description="Extracellular" evidence="2">
    <location>
        <begin position="119"/>
        <end position="124"/>
    </location>
</feature>
<feature type="transmembrane region" description="Helical; Name=Segment S2" evidence="2">
    <location>
        <begin position="125"/>
        <end position="145"/>
    </location>
</feature>
<feature type="topological domain" description="Cytoplasmic" evidence="2">
    <location>
        <begin position="146"/>
        <end position="171"/>
    </location>
</feature>
<feature type="transmembrane region" description="Helical; Name=Segment S3" evidence="2">
    <location>
        <begin position="172"/>
        <end position="192"/>
    </location>
</feature>
<feature type="topological domain" description="Extracellular" evidence="2">
    <location>
        <begin position="193"/>
        <end position="201"/>
    </location>
</feature>
<feature type="transmembrane region" description="Helical; Voltage-sensor; Name=Segment S4" evidence="2">
    <location>
        <begin position="202"/>
        <end position="222"/>
    </location>
</feature>
<feature type="topological domain" description="Cytoplasmic" evidence="2">
    <location>
        <begin position="223"/>
        <end position="253"/>
    </location>
</feature>
<feature type="transmembrane region" description="Helical; Name=Segment S5" evidence="2">
    <location>
        <begin position="254"/>
        <end position="274"/>
    </location>
</feature>
<feature type="topological domain" description="Extracellular" evidence="2">
    <location>
        <begin position="275"/>
        <end position="297"/>
    </location>
</feature>
<feature type="intramembrane region" description="Pore-forming; Name=Segment H5" evidence="2">
    <location>
        <begin position="298"/>
        <end position="319"/>
    </location>
</feature>
<feature type="topological domain" description="Extracellular" evidence="2">
    <location>
        <begin position="320"/>
        <end position="329"/>
    </location>
</feature>
<feature type="transmembrane region" description="Helical; Name=Segment S6" evidence="2">
    <location>
        <begin position="330"/>
        <end position="350"/>
    </location>
</feature>
<feature type="topological domain" description="Cytoplasmic" evidence="2">
    <location>
        <begin position="351"/>
        <end position="774"/>
    </location>
</feature>
<feature type="region of interest" description="Disordered" evidence="7">
    <location>
        <begin position="1"/>
        <end position="48"/>
    </location>
</feature>
<feature type="region of interest" description="Involved in subunit assembly" evidence="1">
    <location>
        <begin position="46"/>
        <end position="91"/>
    </location>
</feature>
<feature type="region of interest" description="Interaction with KCTD3" evidence="4">
    <location>
        <begin position="354"/>
        <end position="774"/>
    </location>
</feature>
<feature type="region of interest" description="Disordered" evidence="7">
    <location>
        <begin position="682"/>
        <end position="774"/>
    </location>
</feature>
<feature type="compositionally biased region" description="Pro residues" evidence="7">
    <location>
        <begin position="751"/>
        <end position="763"/>
    </location>
</feature>
<feature type="binding site" evidence="2">
    <location>
        <position position="492"/>
    </location>
    <ligand>
        <name>3',5'-cyclic AMP</name>
        <dbReference type="ChEBI" id="CHEBI:58165"/>
    </ligand>
</feature>
<feature type="binding site" evidence="2">
    <location>
        <position position="493"/>
    </location>
    <ligand>
        <name>3',5'-cyclic AMP</name>
        <dbReference type="ChEBI" id="CHEBI:58165"/>
    </ligand>
</feature>
<feature type="binding site" evidence="2">
    <location>
        <position position="495"/>
    </location>
    <ligand>
        <name>3',5'-cyclic AMP</name>
        <dbReference type="ChEBI" id="CHEBI:58165"/>
    </ligand>
</feature>
<feature type="binding site" evidence="2">
    <location>
        <position position="502"/>
    </location>
    <ligand>
        <name>3',5'-cyclic AMP</name>
        <dbReference type="ChEBI" id="CHEBI:58165"/>
    </ligand>
</feature>
<feature type="binding site" evidence="2">
    <location>
        <position position="503"/>
    </location>
    <ligand>
        <name>3',5'-cyclic AMP</name>
        <dbReference type="ChEBI" id="CHEBI:58165"/>
    </ligand>
</feature>
<feature type="binding site" evidence="3">
    <location>
        <position position="543"/>
    </location>
    <ligand>
        <name>3',5'-cyclic AMP</name>
        <dbReference type="ChEBI" id="CHEBI:58165"/>
    </ligand>
</feature>
<feature type="binding site" evidence="2">
    <location>
        <position position="546"/>
    </location>
    <ligand>
        <name>3',5'-cyclic AMP</name>
        <dbReference type="ChEBI" id="CHEBI:58165"/>
    </ligand>
</feature>
<feature type="modified residue" description="Phosphoserine" evidence="4">
    <location>
        <position position="634"/>
    </location>
</feature>
<feature type="glycosylation site" description="N-linked (GlcNAc...) asparagine" evidence="6">
    <location>
        <position position="291"/>
    </location>
</feature>
<feature type="sequence variant" id="VAR_048746" description="In dbSNP:rs35001694.">
    <original>P</original>
    <variation>L</variation>
    <location>
        <position position="630"/>
    </location>
</feature>
<feature type="sequence conflict" description="In Ref. 4; AAH00066." evidence="9" ref="4">
    <original>A</original>
    <variation>G</variation>
    <location>
        <position position="206"/>
    </location>
</feature>
<feature type="sequence conflict" description="In Ref. 3; BAA96059." evidence="9" ref="3">
    <original>S</original>
    <variation>T</variation>
    <location>
        <position position="734"/>
    </location>
</feature>
<feature type="helix" evidence="10">
    <location>
        <begin position="59"/>
        <end position="64"/>
    </location>
</feature>
<feature type="helix" evidence="10">
    <location>
        <begin position="68"/>
        <end position="79"/>
    </location>
</feature>
<feature type="helix" evidence="10">
    <location>
        <begin position="91"/>
        <end position="116"/>
    </location>
</feature>
<feature type="strand" evidence="10">
    <location>
        <begin position="117"/>
        <end position="119"/>
    </location>
</feature>
<feature type="helix" evidence="10">
    <location>
        <begin position="124"/>
        <end position="142"/>
    </location>
</feature>
<feature type="helix" evidence="10">
    <location>
        <begin position="143"/>
        <end position="145"/>
    </location>
</feature>
<feature type="turn" evidence="10">
    <location>
        <begin position="160"/>
        <end position="162"/>
    </location>
</feature>
<feature type="helix" evidence="10">
    <location>
        <begin position="163"/>
        <end position="169"/>
    </location>
</feature>
<feature type="turn" evidence="10">
    <location>
        <begin position="170"/>
        <end position="172"/>
    </location>
</feature>
<feature type="helix" evidence="10">
    <location>
        <begin position="173"/>
        <end position="180"/>
    </location>
</feature>
<feature type="helix" evidence="10">
    <location>
        <begin position="183"/>
        <end position="190"/>
    </location>
</feature>
<feature type="helix" evidence="10">
    <location>
        <begin position="213"/>
        <end position="216"/>
    </location>
</feature>
<feature type="helix" evidence="10">
    <location>
        <begin position="217"/>
        <end position="223"/>
    </location>
</feature>
<feature type="helix" evidence="10">
    <location>
        <begin position="224"/>
        <end position="241"/>
    </location>
</feature>
<feature type="helix" evidence="10">
    <location>
        <begin position="246"/>
        <end position="275"/>
    </location>
</feature>
<feature type="helix" evidence="10">
    <location>
        <begin position="283"/>
        <end position="286"/>
    </location>
</feature>
<feature type="strand" evidence="10">
    <location>
        <begin position="290"/>
        <end position="292"/>
    </location>
</feature>
<feature type="helix" evidence="10">
    <location>
        <begin position="294"/>
        <end position="309"/>
    </location>
</feature>
<feature type="strand" evidence="10">
    <location>
        <begin position="315"/>
        <end position="317"/>
    </location>
</feature>
<feature type="helix" evidence="10">
    <location>
        <begin position="322"/>
        <end position="350"/>
    </location>
</feature>
<feature type="helix" evidence="10">
    <location>
        <begin position="355"/>
        <end position="374"/>
    </location>
</feature>
<feature type="helix" evidence="10">
    <location>
        <begin position="378"/>
        <end position="392"/>
    </location>
</feature>
<feature type="helix" evidence="10">
    <location>
        <begin position="399"/>
        <end position="405"/>
    </location>
</feature>
<feature type="helix" evidence="10">
    <location>
        <begin position="408"/>
        <end position="418"/>
    </location>
</feature>
<feature type="helix" evidence="10">
    <location>
        <begin position="420"/>
        <end position="423"/>
    </location>
</feature>
<feature type="helix" evidence="10">
    <location>
        <begin position="427"/>
        <end position="430"/>
    </location>
</feature>
<feature type="helix" evidence="10">
    <location>
        <begin position="434"/>
        <end position="441"/>
    </location>
</feature>
<feature type="strand" evidence="10">
    <location>
        <begin position="445"/>
        <end position="448"/>
    </location>
</feature>
<feature type="strand" evidence="10">
    <location>
        <begin position="454"/>
        <end position="456"/>
    </location>
</feature>
<feature type="strand" evidence="10">
    <location>
        <begin position="465"/>
        <end position="470"/>
    </location>
</feature>
<feature type="strand" evidence="10">
    <location>
        <begin position="473"/>
        <end position="475"/>
    </location>
</feature>
<feature type="strand" evidence="10">
    <location>
        <begin position="490"/>
        <end position="492"/>
    </location>
</feature>
<feature type="helix" evidence="10">
    <location>
        <begin position="493"/>
        <end position="498"/>
    </location>
</feature>
<feature type="strand" evidence="10">
    <location>
        <begin position="506"/>
        <end position="510"/>
    </location>
</feature>
<feature type="strand" evidence="10">
    <location>
        <begin position="513"/>
        <end position="517"/>
    </location>
</feature>
<feature type="helix" evidence="10">
    <location>
        <begin position="520"/>
        <end position="528"/>
    </location>
</feature>
<feature type="helix" evidence="10">
    <location>
        <begin position="530"/>
        <end position="542"/>
    </location>
</feature>
<comment type="function">
    <text evidence="4 8">Hyperpolarization-activated ion channel that are permeable to sodium and potassium ions, with an about 3:1 preference for potassium ions (PubMed:16043489). Contributes to the native pacemaker currents in heart (If) and in neurons (Ih). In particular, plays a pivotal role in maintaining excitability and promoting rhythmic burst firing within hypothalamic nuclei. Exerts a significant influence on the configuration of the cardiac action potential waveform. Does not appear to play a prominent role in the processing of acute, neuropathic, or inflammatory pain (By similarity).</text>
</comment>
<comment type="catalytic activity">
    <reaction evidence="8">
        <text>K(+)(in) = K(+)(out)</text>
        <dbReference type="Rhea" id="RHEA:29463"/>
        <dbReference type="ChEBI" id="CHEBI:29103"/>
    </reaction>
</comment>
<comment type="catalytic activity">
    <reaction evidence="8">
        <text>Na(+)(in) = Na(+)(out)</text>
        <dbReference type="Rhea" id="RHEA:34963"/>
        <dbReference type="ChEBI" id="CHEBI:29101"/>
    </reaction>
</comment>
<comment type="activity regulation">
    <text evidence="4 8">Unlike HCN2 and HCN4, HCN3 is insensitive to cyclic nucleotides, such as cAMP or cGMP. This lack of sensitivity of HCN3, despite harboring a functional cyclic nucleotide-binding domain (CNBD), may be explained by its shorter C-terminal sequence, which may alter the normal autoinhibition of the channel (PubMed:16043489). Inhibited by Cs(1+) and ZD7288 (PubMed:16043489). Phosphatidylinositol-4,5-bisphosphate (PIP(2)) shifts HCN3 activation to more depolarized potentials and accelerated activation kinetics (By similarity).</text>
</comment>
<comment type="subunit">
    <text evidence="4 5">Homotetramer. The potassium channel is composed of a homo- or heterotetrameric complex of pore-forming subunits (By similarity). Interacts with HCN1 (By similarity)1. Interacts with KCTD3; this interaction increases cell surface expression and current density of this channel (By similarity). Interacts with PEX5L (By similarity).</text>
</comment>
<comment type="interaction">
    <interactant intactId="EBI-11178054">
        <id>Q9P1Z3</id>
    </interactant>
    <interactant intactId="EBI-16201983">
        <id>Q4ACU6-1</id>
        <label>Shank3</label>
    </interactant>
    <organismsDiffer>true</organismsDiffer>
    <experiments>3</experiments>
</comment>
<comment type="subcellular location">
    <subcellularLocation>
        <location evidence="8">Cell membrane</location>
        <topology evidence="6">Multi-pass membrane protein</topology>
    </subcellularLocation>
</comment>
<comment type="tissue specificity">
    <text evidence="8">Detected in brain.</text>
</comment>
<comment type="domain">
    <text evidence="2">The segment S4 is the voltage-sensor and is characterized by a series of positively charged amino acids at every third position. The ion-conducting pore region is between segment S5 and S6.</text>
</comment>
<comment type="similarity">
    <text evidence="9">Belongs to the potassium channel HCN family.</text>
</comment>
<comment type="sequence caution" evidence="9">
    <conflict type="erroneous initiation">
        <sequence resource="EMBL-CDS" id="AAH28024"/>
    </conflict>
</comment>
<dbReference type="EMBL" id="AL713999">
    <property type="status" value="NOT_ANNOTATED_CDS"/>
    <property type="molecule type" value="Genomic_DNA"/>
</dbReference>
<dbReference type="EMBL" id="AB040968">
    <property type="protein sequence ID" value="BAA96059.2"/>
    <property type="molecule type" value="mRNA"/>
</dbReference>
<dbReference type="EMBL" id="CH471121">
    <property type="protein sequence ID" value="EAW53084.1"/>
    <property type="molecule type" value="Genomic_DNA"/>
</dbReference>
<dbReference type="EMBL" id="CH471121">
    <property type="protein sequence ID" value="EAW53086.1"/>
    <property type="molecule type" value="Genomic_DNA"/>
</dbReference>
<dbReference type="EMBL" id="BC000066">
    <property type="protein sequence ID" value="AAH00066.1"/>
    <property type="molecule type" value="mRNA"/>
</dbReference>
<dbReference type="EMBL" id="BC028024">
    <property type="protein sequence ID" value="AAH28024.2"/>
    <property type="status" value="ALT_INIT"/>
    <property type="molecule type" value="mRNA"/>
</dbReference>
<dbReference type="CCDS" id="CCDS1108.1"/>
<dbReference type="RefSeq" id="NP_065948.1">
    <property type="nucleotide sequence ID" value="NM_020897.3"/>
</dbReference>
<dbReference type="PDB" id="8INZ">
    <property type="method" value="EM"/>
    <property type="resolution" value="2.72 A"/>
    <property type="chains" value="A/B/C/D=1-774"/>
</dbReference>
<dbReference type="PDB" id="8IO0">
    <property type="method" value="EM"/>
    <property type="resolution" value="3.19 A"/>
    <property type="chains" value="A/B/C/D=1-774"/>
</dbReference>
<dbReference type="PDB" id="8IO3">
    <property type="method" value="EM"/>
    <property type="resolution" value="3.02 A"/>
    <property type="chains" value="A/B/C/D=1-774"/>
</dbReference>
<dbReference type="PDBsum" id="8INZ"/>
<dbReference type="PDBsum" id="8IO0"/>
<dbReference type="PDBsum" id="8IO3"/>
<dbReference type="EMDB" id="EMD-35602"/>
<dbReference type="EMDB" id="EMD-35603"/>
<dbReference type="EMDB" id="EMD-35606"/>
<dbReference type="SMR" id="Q9P1Z3"/>
<dbReference type="BioGRID" id="121691">
    <property type="interactions" value="7"/>
</dbReference>
<dbReference type="ComplexPortal" id="CPX-267">
    <property type="entry name" value="HCN3 channel complex"/>
</dbReference>
<dbReference type="CORUM" id="Q9P1Z3"/>
<dbReference type="DIP" id="DIP-62039N"/>
<dbReference type="FunCoup" id="Q9P1Z3">
    <property type="interactions" value="53"/>
</dbReference>
<dbReference type="IntAct" id="Q9P1Z3">
    <property type="interactions" value="5"/>
</dbReference>
<dbReference type="STRING" id="9606.ENSP00000357342"/>
<dbReference type="BindingDB" id="Q9P1Z3"/>
<dbReference type="ChEMBL" id="CHEMBL1795173"/>
<dbReference type="DrugCentral" id="Q9P1Z3"/>
<dbReference type="GuidetoPHARMACOLOGY" id="402"/>
<dbReference type="GlyCosmos" id="Q9P1Z3">
    <property type="glycosylation" value="1 site, No reported glycans"/>
</dbReference>
<dbReference type="GlyGen" id="Q9P1Z3">
    <property type="glycosylation" value="3 sites, 1 O-linked glycan (1 site)"/>
</dbReference>
<dbReference type="iPTMnet" id="Q9P1Z3"/>
<dbReference type="PhosphoSitePlus" id="Q9P1Z3"/>
<dbReference type="BioMuta" id="HCN3"/>
<dbReference type="DMDM" id="29840780"/>
<dbReference type="MassIVE" id="Q9P1Z3"/>
<dbReference type="PaxDb" id="9606-ENSP00000357342"/>
<dbReference type="PeptideAtlas" id="Q9P1Z3"/>
<dbReference type="ProteomicsDB" id="83687"/>
<dbReference type="ABCD" id="Q9P1Z3">
    <property type="antibodies" value="1 sequenced antibody"/>
</dbReference>
<dbReference type="Antibodypedia" id="20417">
    <property type="antibodies" value="291 antibodies from 36 providers"/>
</dbReference>
<dbReference type="DNASU" id="57657"/>
<dbReference type="Ensembl" id="ENST00000368358.4">
    <property type="protein sequence ID" value="ENSP00000357342.3"/>
    <property type="gene ID" value="ENSG00000143630.10"/>
</dbReference>
<dbReference type="Ensembl" id="ENST00000575670.1">
    <property type="protein sequence ID" value="ENSP00000458364.1"/>
    <property type="gene ID" value="ENSG00000263324.5"/>
</dbReference>
<dbReference type="GeneID" id="57657"/>
<dbReference type="KEGG" id="hsa:57657"/>
<dbReference type="MANE-Select" id="ENST00000368358.4">
    <property type="protein sequence ID" value="ENSP00000357342.3"/>
    <property type="RefSeq nucleotide sequence ID" value="NM_020897.3"/>
    <property type="RefSeq protein sequence ID" value="NP_065948.1"/>
</dbReference>
<dbReference type="UCSC" id="uc001fjz.3">
    <property type="organism name" value="human"/>
</dbReference>
<dbReference type="AGR" id="HGNC:19183"/>
<dbReference type="CTD" id="57657"/>
<dbReference type="DisGeNET" id="57657"/>
<dbReference type="GeneCards" id="HCN3"/>
<dbReference type="HGNC" id="HGNC:19183">
    <property type="gene designation" value="HCN3"/>
</dbReference>
<dbReference type="HPA" id="ENSG00000143630">
    <property type="expression patterns" value="Tissue enhanced (brain, liver)"/>
</dbReference>
<dbReference type="MIM" id="609973">
    <property type="type" value="gene"/>
</dbReference>
<dbReference type="neXtProt" id="NX_Q9P1Z3"/>
<dbReference type="OpenTargets" id="ENSG00000143630"/>
<dbReference type="PharmGKB" id="PA38821"/>
<dbReference type="VEuPathDB" id="HostDB:ENSG00000143630"/>
<dbReference type="eggNOG" id="KOG0498">
    <property type="taxonomic scope" value="Eukaryota"/>
</dbReference>
<dbReference type="GeneTree" id="ENSGT00940000162023"/>
<dbReference type="HOGENOM" id="CLU_005746_15_1_1"/>
<dbReference type="InParanoid" id="Q9P1Z3"/>
<dbReference type="OMA" id="HMANHSW"/>
<dbReference type="OrthoDB" id="421226at2759"/>
<dbReference type="PAN-GO" id="Q9P1Z3">
    <property type="GO annotations" value="7 GO annotations based on evolutionary models"/>
</dbReference>
<dbReference type="PhylomeDB" id="Q9P1Z3"/>
<dbReference type="TreeFam" id="TF318250"/>
<dbReference type="PathwayCommons" id="Q9P1Z3"/>
<dbReference type="Reactome" id="R-HSA-1296061">
    <property type="pathway name" value="HCN channels"/>
</dbReference>
<dbReference type="SignaLink" id="Q9P1Z3"/>
<dbReference type="BioGRID-ORCS" id="57657">
    <property type="hits" value="19 hits in 1151 CRISPR screens"/>
</dbReference>
<dbReference type="ChiTaRS" id="HCN3">
    <property type="organism name" value="human"/>
</dbReference>
<dbReference type="GeneWiki" id="HCN3"/>
<dbReference type="GenomeRNAi" id="57657"/>
<dbReference type="Pharos" id="Q9P1Z3">
    <property type="development level" value="Tclin"/>
</dbReference>
<dbReference type="PRO" id="PR:Q9P1Z3"/>
<dbReference type="Proteomes" id="UP000005640">
    <property type="component" value="Chromosome 1"/>
</dbReference>
<dbReference type="RNAct" id="Q9P1Z3">
    <property type="molecule type" value="protein"/>
</dbReference>
<dbReference type="Bgee" id="ENSG00000143630">
    <property type="expression patterns" value="Expressed in cortical plate and 97 other cell types or tissues"/>
</dbReference>
<dbReference type="GO" id="GO:0030424">
    <property type="term" value="C:axon"/>
    <property type="evidence" value="ECO:0000318"/>
    <property type="project" value="GO_Central"/>
</dbReference>
<dbReference type="GO" id="GO:0030425">
    <property type="term" value="C:dendrite"/>
    <property type="evidence" value="ECO:0000318"/>
    <property type="project" value="GO_Central"/>
</dbReference>
<dbReference type="GO" id="GO:0098855">
    <property type="term" value="C:HCN channel complex"/>
    <property type="evidence" value="ECO:0000353"/>
    <property type="project" value="ComplexPortal"/>
</dbReference>
<dbReference type="GO" id="GO:0005886">
    <property type="term" value="C:plasma membrane"/>
    <property type="evidence" value="ECO:0000314"/>
    <property type="project" value="UniProtKB"/>
</dbReference>
<dbReference type="GO" id="GO:0030552">
    <property type="term" value="F:cAMP binding"/>
    <property type="evidence" value="ECO:0007669"/>
    <property type="project" value="UniProtKB-KW"/>
</dbReference>
<dbReference type="GO" id="GO:0005249">
    <property type="term" value="F:voltage-gated potassium channel activity"/>
    <property type="evidence" value="ECO:0000314"/>
    <property type="project" value="UniProtKB"/>
</dbReference>
<dbReference type="GO" id="GO:0005248">
    <property type="term" value="F:voltage-gated sodium channel activity"/>
    <property type="evidence" value="ECO:0000314"/>
    <property type="project" value="UniProtKB"/>
</dbReference>
<dbReference type="GO" id="GO:0071320">
    <property type="term" value="P:cellular response to cAMP"/>
    <property type="evidence" value="ECO:0000314"/>
    <property type="project" value="ComplexPortal"/>
</dbReference>
<dbReference type="GO" id="GO:1990573">
    <property type="term" value="P:potassium ion import across plasma membrane"/>
    <property type="evidence" value="ECO:0000303"/>
    <property type="project" value="ComplexPortal"/>
</dbReference>
<dbReference type="GO" id="GO:0071805">
    <property type="term" value="P:potassium ion transmembrane transport"/>
    <property type="evidence" value="ECO:0000314"/>
    <property type="project" value="UniProtKB"/>
</dbReference>
<dbReference type="GO" id="GO:0086091">
    <property type="term" value="P:regulation of heart rate by cardiac conduction"/>
    <property type="evidence" value="ECO:0000303"/>
    <property type="project" value="ComplexPortal"/>
</dbReference>
<dbReference type="GO" id="GO:0003254">
    <property type="term" value="P:regulation of membrane depolarization"/>
    <property type="evidence" value="ECO:0000314"/>
    <property type="project" value="ComplexPortal"/>
</dbReference>
<dbReference type="GO" id="GO:0042391">
    <property type="term" value="P:regulation of membrane potential"/>
    <property type="evidence" value="ECO:0000315"/>
    <property type="project" value="UniProtKB"/>
</dbReference>
<dbReference type="GO" id="GO:0098907">
    <property type="term" value="P:regulation of SA node cell action potential"/>
    <property type="evidence" value="ECO:0000303"/>
    <property type="project" value="ComplexPortal"/>
</dbReference>
<dbReference type="GO" id="GO:0098719">
    <property type="term" value="P:sodium ion import across plasma membrane"/>
    <property type="evidence" value="ECO:0000303"/>
    <property type="project" value="ComplexPortal"/>
</dbReference>
<dbReference type="GO" id="GO:0035725">
    <property type="term" value="P:sodium ion transmembrane transport"/>
    <property type="evidence" value="ECO:0000314"/>
    <property type="project" value="UniProtKB"/>
</dbReference>
<dbReference type="CDD" id="cd00038">
    <property type="entry name" value="CAP_ED"/>
    <property type="match status" value="1"/>
</dbReference>
<dbReference type="FunFam" id="1.10.287.70:FF:000031">
    <property type="entry name" value="Potassium/sodium hyperpolarization-activated cyclic nucleotide-gated channel 1, putative"/>
    <property type="match status" value="1"/>
</dbReference>
<dbReference type="FunFam" id="1.10.287.630:FF:000002">
    <property type="entry name" value="Potassium/sodium hyperpolarization-activated cyclic nucleotide-gated channel 4"/>
    <property type="match status" value="1"/>
</dbReference>
<dbReference type="FunFam" id="2.60.120.10:FF:000007">
    <property type="entry name" value="Putative potassium/sodium hyperpolarization-activated cyclic nucleotide-gated channel 2"/>
    <property type="match status" value="1"/>
</dbReference>
<dbReference type="Gene3D" id="1.10.287.70">
    <property type="match status" value="1"/>
</dbReference>
<dbReference type="Gene3D" id="1.10.287.630">
    <property type="entry name" value="Helix hairpin bin"/>
    <property type="match status" value="1"/>
</dbReference>
<dbReference type="Gene3D" id="2.60.120.10">
    <property type="entry name" value="Jelly Rolls"/>
    <property type="match status" value="1"/>
</dbReference>
<dbReference type="InterPro" id="IPR000595">
    <property type="entry name" value="cNMP-bd_dom"/>
</dbReference>
<dbReference type="InterPro" id="IPR018490">
    <property type="entry name" value="cNMP-bd_dom_sf"/>
</dbReference>
<dbReference type="InterPro" id="IPR005821">
    <property type="entry name" value="Ion_trans_dom"/>
</dbReference>
<dbReference type="InterPro" id="IPR013621">
    <property type="entry name" value="Ion_trans_N"/>
</dbReference>
<dbReference type="InterPro" id="IPR051413">
    <property type="entry name" value="K/Na_HCN_channel"/>
</dbReference>
<dbReference type="InterPro" id="IPR003938">
    <property type="entry name" value="K_chnl_volt-dep_EAG/ELK/ERG"/>
</dbReference>
<dbReference type="InterPro" id="IPR014710">
    <property type="entry name" value="RmlC-like_jellyroll"/>
</dbReference>
<dbReference type="PANTHER" id="PTHR45689">
    <property type="entry name" value="I[[H]] CHANNEL, ISOFORM E"/>
    <property type="match status" value="1"/>
</dbReference>
<dbReference type="PANTHER" id="PTHR45689:SF7">
    <property type="entry name" value="POTASSIUM_SODIUM HYPERPOLARIZATION-ACTIVATED CYCLIC NUCLEOTIDE-GATED CHANNEL 3"/>
    <property type="match status" value="1"/>
</dbReference>
<dbReference type="Pfam" id="PF00027">
    <property type="entry name" value="cNMP_binding"/>
    <property type="match status" value="1"/>
</dbReference>
<dbReference type="Pfam" id="PF00520">
    <property type="entry name" value="Ion_trans"/>
    <property type="match status" value="1"/>
</dbReference>
<dbReference type="Pfam" id="PF08412">
    <property type="entry name" value="Ion_trans_N"/>
    <property type="match status" value="1"/>
</dbReference>
<dbReference type="PRINTS" id="PR01463">
    <property type="entry name" value="EAGCHANLFMLY"/>
</dbReference>
<dbReference type="SMART" id="SM00100">
    <property type="entry name" value="cNMP"/>
    <property type="match status" value="1"/>
</dbReference>
<dbReference type="SUPFAM" id="SSF51206">
    <property type="entry name" value="cAMP-binding domain-like"/>
    <property type="match status" value="1"/>
</dbReference>
<dbReference type="SUPFAM" id="SSF81324">
    <property type="entry name" value="Voltage-gated potassium channels"/>
    <property type="match status" value="1"/>
</dbReference>
<dbReference type="PROSITE" id="PS50042">
    <property type="entry name" value="CNMP_BINDING_3"/>
    <property type="match status" value="1"/>
</dbReference>
<reference key="1">
    <citation type="journal article" date="2006" name="Nature">
        <title>The DNA sequence and biological annotation of human chromosome 1.</title>
        <authorList>
            <person name="Gregory S.G."/>
            <person name="Barlow K.F."/>
            <person name="McLay K.E."/>
            <person name="Kaul R."/>
            <person name="Swarbreck D."/>
            <person name="Dunham A."/>
            <person name="Scott C.E."/>
            <person name="Howe K.L."/>
            <person name="Woodfine K."/>
            <person name="Spencer C.C.A."/>
            <person name="Jones M.C."/>
            <person name="Gillson C."/>
            <person name="Searle S."/>
            <person name="Zhou Y."/>
            <person name="Kokocinski F."/>
            <person name="McDonald L."/>
            <person name="Evans R."/>
            <person name="Phillips K."/>
            <person name="Atkinson A."/>
            <person name="Cooper R."/>
            <person name="Jones C."/>
            <person name="Hall R.E."/>
            <person name="Andrews T.D."/>
            <person name="Lloyd C."/>
            <person name="Ainscough R."/>
            <person name="Almeida J.P."/>
            <person name="Ambrose K.D."/>
            <person name="Anderson F."/>
            <person name="Andrew R.W."/>
            <person name="Ashwell R.I.S."/>
            <person name="Aubin K."/>
            <person name="Babbage A.K."/>
            <person name="Bagguley C.L."/>
            <person name="Bailey J."/>
            <person name="Beasley H."/>
            <person name="Bethel G."/>
            <person name="Bird C.P."/>
            <person name="Bray-Allen S."/>
            <person name="Brown J.Y."/>
            <person name="Brown A.J."/>
            <person name="Buckley D."/>
            <person name="Burton J."/>
            <person name="Bye J."/>
            <person name="Carder C."/>
            <person name="Chapman J.C."/>
            <person name="Clark S.Y."/>
            <person name="Clarke G."/>
            <person name="Clee C."/>
            <person name="Cobley V."/>
            <person name="Collier R.E."/>
            <person name="Corby N."/>
            <person name="Coville G.J."/>
            <person name="Davies J."/>
            <person name="Deadman R."/>
            <person name="Dunn M."/>
            <person name="Earthrowl M."/>
            <person name="Ellington A.G."/>
            <person name="Errington H."/>
            <person name="Frankish A."/>
            <person name="Frankland J."/>
            <person name="French L."/>
            <person name="Garner P."/>
            <person name="Garnett J."/>
            <person name="Gay L."/>
            <person name="Ghori M.R.J."/>
            <person name="Gibson R."/>
            <person name="Gilby L.M."/>
            <person name="Gillett W."/>
            <person name="Glithero R.J."/>
            <person name="Grafham D.V."/>
            <person name="Griffiths C."/>
            <person name="Griffiths-Jones S."/>
            <person name="Grocock R."/>
            <person name="Hammond S."/>
            <person name="Harrison E.S.I."/>
            <person name="Hart E."/>
            <person name="Haugen E."/>
            <person name="Heath P.D."/>
            <person name="Holmes S."/>
            <person name="Holt K."/>
            <person name="Howden P.J."/>
            <person name="Hunt A.R."/>
            <person name="Hunt S.E."/>
            <person name="Hunter G."/>
            <person name="Isherwood J."/>
            <person name="James R."/>
            <person name="Johnson C."/>
            <person name="Johnson D."/>
            <person name="Joy A."/>
            <person name="Kay M."/>
            <person name="Kershaw J.K."/>
            <person name="Kibukawa M."/>
            <person name="Kimberley A.M."/>
            <person name="King A."/>
            <person name="Knights A.J."/>
            <person name="Lad H."/>
            <person name="Laird G."/>
            <person name="Lawlor S."/>
            <person name="Leongamornlert D.A."/>
            <person name="Lloyd D.M."/>
            <person name="Loveland J."/>
            <person name="Lovell J."/>
            <person name="Lush M.J."/>
            <person name="Lyne R."/>
            <person name="Martin S."/>
            <person name="Mashreghi-Mohammadi M."/>
            <person name="Matthews L."/>
            <person name="Matthews N.S.W."/>
            <person name="McLaren S."/>
            <person name="Milne S."/>
            <person name="Mistry S."/>
            <person name="Moore M.J.F."/>
            <person name="Nickerson T."/>
            <person name="O'Dell C.N."/>
            <person name="Oliver K."/>
            <person name="Palmeiri A."/>
            <person name="Palmer S.A."/>
            <person name="Parker A."/>
            <person name="Patel D."/>
            <person name="Pearce A.V."/>
            <person name="Peck A.I."/>
            <person name="Pelan S."/>
            <person name="Phelps K."/>
            <person name="Phillimore B.J."/>
            <person name="Plumb R."/>
            <person name="Rajan J."/>
            <person name="Raymond C."/>
            <person name="Rouse G."/>
            <person name="Saenphimmachak C."/>
            <person name="Sehra H.K."/>
            <person name="Sheridan E."/>
            <person name="Shownkeen R."/>
            <person name="Sims S."/>
            <person name="Skuce C.D."/>
            <person name="Smith M."/>
            <person name="Steward C."/>
            <person name="Subramanian S."/>
            <person name="Sycamore N."/>
            <person name="Tracey A."/>
            <person name="Tromans A."/>
            <person name="Van Helmond Z."/>
            <person name="Wall M."/>
            <person name="Wallis J.M."/>
            <person name="White S."/>
            <person name="Whitehead S.L."/>
            <person name="Wilkinson J.E."/>
            <person name="Willey D.L."/>
            <person name="Williams H."/>
            <person name="Wilming L."/>
            <person name="Wray P.W."/>
            <person name="Wu Z."/>
            <person name="Coulson A."/>
            <person name="Vaudin M."/>
            <person name="Sulston J.E."/>
            <person name="Durbin R.M."/>
            <person name="Hubbard T."/>
            <person name="Wooster R."/>
            <person name="Dunham I."/>
            <person name="Carter N.P."/>
            <person name="McVean G."/>
            <person name="Ross M.T."/>
            <person name="Harrow J."/>
            <person name="Olson M.V."/>
            <person name="Beck S."/>
            <person name="Rogers J."/>
            <person name="Bentley D.R."/>
        </authorList>
    </citation>
    <scope>NUCLEOTIDE SEQUENCE [LARGE SCALE GENOMIC DNA]</scope>
</reference>
<reference key="2">
    <citation type="submission" date="2005-09" db="EMBL/GenBank/DDBJ databases">
        <authorList>
            <person name="Mural R.J."/>
            <person name="Istrail S."/>
            <person name="Sutton G.G."/>
            <person name="Florea L."/>
            <person name="Halpern A.L."/>
            <person name="Mobarry C.M."/>
            <person name="Lippert R."/>
            <person name="Walenz B."/>
            <person name="Shatkay H."/>
            <person name="Dew I."/>
            <person name="Miller J.R."/>
            <person name="Flanigan M.J."/>
            <person name="Edwards N.J."/>
            <person name="Bolanos R."/>
            <person name="Fasulo D."/>
            <person name="Halldorsson B.V."/>
            <person name="Hannenhalli S."/>
            <person name="Turner R."/>
            <person name="Yooseph S."/>
            <person name="Lu F."/>
            <person name="Nusskern D.R."/>
            <person name="Shue B.C."/>
            <person name="Zheng X.H."/>
            <person name="Zhong F."/>
            <person name="Delcher A.L."/>
            <person name="Huson D.H."/>
            <person name="Kravitz S.A."/>
            <person name="Mouchard L."/>
            <person name="Reinert K."/>
            <person name="Remington K.A."/>
            <person name="Clark A.G."/>
            <person name="Waterman M.S."/>
            <person name="Eichler E.E."/>
            <person name="Adams M.D."/>
            <person name="Hunkapiller M.W."/>
            <person name="Myers E.W."/>
            <person name="Venter J.C."/>
        </authorList>
    </citation>
    <scope>NUCLEOTIDE SEQUENCE [LARGE SCALE GENOMIC DNA]</scope>
</reference>
<reference key="3">
    <citation type="journal article" date="2000" name="DNA Res.">
        <title>Prediction of the coding sequences of unidentified human genes. XVII. The complete sequences of 100 new cDNA clones from brain which code for large proteins in vitro.</title>
        <authorList>
            <person name="Nagase T."/>
            <person name="Kikuno R."/>
            <person name="Ishikawa K."/>
            <person name="Hirosawa M."/>
            <person name="Ohara O."/>
        </authorList>
    </citation>
    <scope>NUCLEOTIDE SEQUENCE [LARGE SCALE MRNA] OF 64-774</scope>
    <source>
        <tissue>Brain</tissue>
    </source>
</reference>
<reference key="4">
    <citation type="journal article" date="2004" name="Genome Res.">
        <title>The status, quality, and expansion of the NIH full-length cDNA project: the Mammalian Gene Collection (MGC).</title>
        <authorList>
            <consortium name="The MGC Project Team"/>
        </authorList>
    </citation>
    <scope>NUCLEOTIDE SEQUENCE [LARGE SCALE MRNA] OF 204-774</scope>
    <source>
        <tissue>Brain</tissue>
    </source>
</reference>
<reference key="5">
    <citation type="journal article" date="2005" name="J. Biol. Chem.">
        <title>Functional expression of the human HCN3 channel.</title>
        <authorList>
            <person name="Stieber J."/>
            <person name="Stockl G."/>
            <person name="Herrmann S."/>
            <person name="Hassfurth B."/>
            <person name="Hofmann F."/>
        </authorList>
    </citation>
    <scope>FUNCTION</scope>
    <scope>TRANSPORTER ACTIVITY</scope>
    <scope>ACTIVITY REGULATION</scope>
    <scope>SUBCELLULAR LOCATION</scope>
    <scope>TISSUE SPECIFICITY</scope>
</reference>
<protein>
    <recommendedName>
        <fullName>Potassium/sodium hyperpolarization-activated cyclic nucleotide-gated channel 3</fullName>
    </recommendedName>
</protein>